<proteinExistence type="inferred from homology"/>
<evidence type="ECO:0000255" key="1">
    <source>
        <dbReference type="HAMAP-Rule" id="MF_00012"/>
    </source>
</evidence>
<gene>
    <name evidence="1" type="primary">ilvD</name>
    <name type="ordered locus">AM1_3143</name>
</gene>
<comment type="function">
    <text evidence="1">Functions in the biosynthesis of branched-chain amino acids. Catalyzes the dehydration of (2R,3R)-2,3-dihydroxy-3-methylpentanoate (2,3-dihydroxy-3-methylvalerate) into 2-oxo-3-methylpentanoate (2-oxo-3-methylvalerate) and of (2R)-2,3-dihydroxy-3-methylbutanoate (2,3-dihydroxyisovalerate) into 2-oxo-3-methylbutanoate (2-oxoisovalerate), the penultimate precursor to L-isoleucine and L-valine, respectively.</text>
</comment>
<comment type="catalytic activity">
    <reaction evidence="1">
        <text>(2R)-2,3-dihydroxy-3-methylbutanoate = 3-methyl-2-oxobutanoate + H2O</text>
        <dbReference type="Rhea" id="RHEA:24809"/>
        <dbReference type="ChEBI" id="CHEBI:11851"/>
        <dbReference type="ChEBI" id="CHEBI:15377"/>
        <dbReference type="ChEBI" id="CHEBI:49072"/>
        <dbReference type="EC" id="4.2.1.9"/>
    </reaction>
    <physiologicalReaction direction="left-to-right" evidence="1">
        <dbReference type="Rhea" id="RHEA:24810"/>
    </physiologicalReaction>
</comment>
<comment type="catalytic activity">
    <reaction evidence="1">
        <text>(2R,3R)-2,3-dihydroxy-3-methylpentanoate = (S)-3-methyl-2-oxopentanoate + H2O</text>
        <dbReference type="Rhea" id="RHEA:27694"/>
        <dbReference type="ChEBI" id="CHEBI:15377"/>
        <dbReference type="ChEBI" id="CHEBI:35146"/>
        <dbReference type="ChEBI" id="CHEBI:49258"/>
        <dbReference type="EC" id="4.2.1.9"/>
    </reaction>
    <physiologicalReaction direction="left-to-right" evidence="1">
        <dbReference type="Rhea" id="RHEA:27695"/>
    </physiologicalReaction>
</comment>
<comment type="cofactor">
    <cofactor evidence="1">
        <name>[2Fe-2S] cluster</name>
        <dbReference type="ChEBI" id="CHEBI:190135"/>
    </cofactor>
    <text evidence="1">Binds 1 [2Fe-2S] cluster per subunit. This cluster acts as a Lewis acid cofactor.</text>
</comment>
<comment type="cofactor">
    <cofactor evidence="1">
        <name>Mg(2+)</name>
        <dbReference type="ChEBI" id="CHEBI:18420"/>
    </cofactor>
</comment>
<comment type="pathway">
    <text evidence="1">Amino-acid biosynthesis; L-isoleucine biosynthesis; L-isoleucine from 2-oxobutanoate: step 3/4.</text>
</comment>
<comment type="pathway">
    <text evidence="1">Amino-acid biosynthesis; L-valine biosynthesis; L-valine from pyruvate: step 3/4.</text>
</comment>
<comment type="subunit">
    <text evidence="1">Homodimer.</text>
</comment>
<comment type="similarity">
    <text evidence="1">Belongs to the IlvD/Edd family.</text>
</comment>
<name>ILVD_ACAM1</name>
<reference key="1">
    <citation type="journal article" date="2008" name="Proc. Natl. Acad. Sci. U.S.A.">
        <title>Niche adaptation and genome expansion in the chlorophyll d-producing cyanobacterium Acaryochloris marina.</title>
        <authorList>
            <person name="Swingley W.D."/>
            <person name="Chen M."/>
            <person name="Cheung P.C."/>
            <person name="Conrad A.L."/>
            <person name="Dejesa L.C."/>
            <person name="Hao J."/>
            <person name="Honchak B.M."/>
            <person name="Karbach L.E."/>
            <person name="Kurdoglu A."/>
            <person name="Lahiri S."/>
            <person name="Mastrian S.D."/>
            <person name="Miyashita H."/>
            <person name="Page L."/>
            <person name="Ramakrishna P."/>
            <person name="Satoh S."/>
            <person name="Sattley W.M."/>
            <person name="Shimada Y."/>
            <person name="Taylor H.L."/>
            <person name="Tomo T."/>
            <person name="Tsuchiya T."/>
            <person name="Wang Z.T."/>
            <person name="Raymond J."/>
            <person name="Mimuro M."/>
            <person name="Blankenship R.E."/>
            <person name="Touchman J.W."/>
        </authorList>
    </citation>
    <scope>NUCLEOTIDE SEQUENCE [LARGE SCALE GENOMIC DNA]</scope>
    <source>
        <strain>MBIC 11017</strain>
    </source>
</reference>
<feature type="chain" id="PRO_1000073964" description="Dihydroxy-acid dehydratase">
    <location>
        <begin position="1"/>
        <end position="561"/>
    </location>
</feature>
<feature type="active site" description="Proton acceptor" evidence="1">
    <location>
        <position position="473"/>
    </location>
</feature>
<feature type="binding site" evidence="1">
    <location>
        <position position="50"/>
    </location>
    <ligand>
        <name>[2Fe-2S] cluster</name>
        <dbReference type="ChEBI" id="CHEBI:190135"/>
    </ligand>
</feature>
<feature type="binding site" evidence="1">
    <location>
        <position position="82"/>
    </location>
    <ligand>
        <name>Mg(2+)</name>
        <dbReference type="ChEBI" id="CHEBI:18420"/>
    </ligand>
</feature>
<feature type="binding site" evidence="1">
    <location>
        <position position="123"/>
    </location>
    <ligand>
        <name>[2Fe-2S] cluster</name>
        <dbReference type="ChEBI" id="CHEBI:190135"/>
    </ligand>
</feature>
<feature type="binding site" evidence="1">
    <location>
        <position position="124"/>
    </location>
    <ligand>
        <name>Mg(2+)</name>
        <dbReference type="ChEBI" id="CHEBI:18420"/>
    </ligand>
</feature>
<feature type="binding site" description="via carbamate group" evidence="1">
    <location>
        <position position="125"/>
    </location>
    <ligand>
        <name>Mg(2+)</name>
        <dbReference type="ChEBI" id="CHEBI:18420"/>
    </ligand>
</feature>
<feature type="binding site" evidence="1">
    <location>
        <position position="195"/>
    </location>
    <ligand>
        <name>[2Fe-2S] cluster</name>
        <dbReference type="ChEBI" id="CHEBI:190135"/>
    </ligand>
</feature>
<feature type="binding site" evidence="1">
    <location>
        <position position="447"/>
    </location>
    <ligand>
        <name>Mg(2+)</name>
        <dbReference type="ChEBI" id="CHEBI:18420"/>
    </ligand>
</feature>
<feature type="modified residue" description="N6-carboxylysine" evidence="1">
    <location>
        <position position="125"/>
    </location>
</feature>
<dbReference type="EC" id="4.2.1.9" evidence="1"/>
<dbReference type="EMBL" id="CP000828">
    <property type="protein sequence ID" value="ABW28139.1"/>
    <property type="molecule type" value="Genomic_DNA"/>
</dbReference>
<dbReference type="RefSeq" id="WP_012163567.1">
    <property type="nucleotide sequence ID" value="NC_009925.1"/>
</dbReference>
<dbReference type="SMR" id="B0CEN4"/>
<dbReference type="STRING" id="329726.AM1_3143"/>
<dbReference type="KEGG" id="amr:AM1_3143"/>
<dbReference type="eggNOG" id="COG0129">
    <property type="taxonomic scope" value="Bacteria"/>
</dbReference>
<dbReference type="HOGENOM" id="CLU_014271_4_2_3"/>
<dbReference type="OrthoDB" id="9807077at2"/>
<dbReference type="UniPathway" id="UPA00047">
    <property type="reaction ID" value="UER00057"/>
</dbReference>
<dbReference type="UniPathway" id="UPA00049">
    <property type="reaction ID" value="UER00061"/>
</dbReference>
<dbReference type="Proteomes" id="UP000000268">
    <property type="component" value="Chromosome"/>
</dbReference>
<dbReference type="GO" id="GO:0051537">
    <property type="term" value="F:2 iron, 2 sulfur cluster binding"/>
    <property type="evidence" value="ECO:0007669"/>
    <property type="project" value="UniProtKB-UniRule"/>
</dbReference>
<dbReference type="GO" id="GO:0004160">
    <property type="term" value="F:dihydroxy-acid dehydratase activity"/>
    <property type="evidence" value="ECO:0007669"/>
    <property type="project" value="UniProtKB-UniRule"/>
</dbReference>
<dbReference type="GO" id="GO:0000287">
    <property type="term" value="F:magnesium ion binding"/>
    <property type="evidence" value="ECO:0007669"/>
    <property type="project" value="UniProtKB-UniRule"/>
</dbReference>
<dbReference type="GO" id="GO:0009097">
    <property type="term" value="P:isoleucine biosynthetic process"/>
    <property type="evidence" value="ECO:0007669"/>
    <property type="project" value="UniProtKB-UniRule"/>
</dbReference>
<dbReference type="GO" id="GO:0009099">
    <property type="term" value="P:L-valine biosynthetic process"/>
    <property type="evidence" value="ECO:0007669"/>
    <property type="project" value="UniProtKB-UniRule"/>
</dbReference>
<dbReference type="FunFam" id="3.50.30.80:FF:000001">
    <property type="entry name" value="Dihydroxy-acid dehydratase"/>
    <property type="match status" value="1"/>
</dbReference>
<dbReference type="Gene3D" id="3.50.30.80">
    <property type="entry name" value="IlvD/EDD C-terminal domain-like"/>
    <property type="match status" value="1"/>
</dbReference>
<dbReference type="HAMAP" id="MF_00012">
    <property type="entry name" value="IlvD"/>
    <property type="match status" value="1"/>
</dbReference>
<dbReference type="InterPro" id="IPR050165">
    <property type="entry name" value="DHAD_IlvD/Edd"/>
</dbReference>
<dbReference type="InterPro" id="IPR042096">
    <property type="entry name" value="Dihydro-acid_dehy_C"/>
</dbReference>
<dbReference type="InterPro" id="IPR004404">
    <property type="entry name" value="DihydroxyA_deHydtase"/>
</dbReference>
<dbReference type="InterPro" id="IPR020558">
    <property type="entry name" value="DiOHA_6PGluconate_deHydtase_CS"/>
</dbReference>
<dbReference type="InterPro" id="IPR056740">
    <property type="entry name" value="ILV_EDD_C"/>
</dbReference>
<dbReference type="InterPro" id="IPR000581">
    <property type="entry name" value="ILV_EDD_N"/>
</dbReference>
<dbReference type="InterPro" id="IPR037237">
    <property type="entry name" value="IlvD/EDD_N"/>
</dbReference>
<dbReference type="NCBIfam" id="TIGR00110">
    <property type="entry name" value="ilvD"/>
    <property type="match status" value="1"/>
</dbReference>
<dbReference type="NCBIfam" id="NF002068">
    <property type="entry name" value="PRK00911.1"/>
    <property type="match status" value="1"/>
</dbReference>
<dbReference type="PANTHER" id="PTHR21000">
    <property type="entry name" value="DIHYDROXY-ACID DEHYDRATASE DAD"/>
    <property type="match status" value="1"/>
</dbReference>
<dbReference type="PANTHER" id="PTHR21000:SF5">
    <property type="entry name" value="DIHYDROXY-ACID DEHYDRATASE, MITOCHONDRIAL"/>
    <property type="match status" value="1"/>
</dbReference>
<dbReference type="Pfam" id="PF24877">
    <property type="entry name" value="ILV_EDD_C"/>
    <property type="match status" value="1"/>
</dbReference>
<dbReference type="Pfam" id="PF00920">
    <property type="entry name" value="ILVD_EDD_N"/>
    <property type="match status" value="1"/>
</dbReference>
<dbReference type="SUPFAM" id="SSF143975">
    <property type="entry name" value="IlvD/EDD N-terminal domain-like"/>
    <property type="match status" value="1"/>
</dbReference>
<dbReference type="SUPFAM" id="SSF52016">
    <property type="entry name" value="LeuD/IlvD-like"/>
    <property type="match status" value="1"/>
</dbReference>
<dbReference type="PROSITE" id="PS00886">
    <property type="entry name" value="ILVD_EDD_1"/>
    <property type="match status" value="1"/>
</dbReference>
<dbReference type="PROSITE" id="PS00887">
    <property type="entry name" value="ILVD_EDD_2"/>
    <property type="match status" value="1"/>
</dbReference>
<sequence>MSDNRNSQVVTQGVQRAPNRAMLRAVGFGDDDFTKPIVGLANGFSTITPCNMGIDSLATRAEASIRTAGAMPQKFGTITISDGISMGTEGMKYSLVSREVIADSIETACMGQSMDGVLAIGGCDKNMPGAMLAMARMNIPAIFVYGGTIKPGHLNGEDLTVVSAFEAVGQHSAGRISEAELTAVEKHACPGAGSCGGMYTANTMSSAFEAMGMSLMYSSTMAAEDEEKAVSAEQSAAVLVEAIHKQILPRDILTRKAFENAIAVIMAVGGSTNAVLHLLAISRAAGDSLTLDDFETIRAQVPVICDLKPSGRYVATDLHKAGGIPLVMKMLLEHGLLHGDALTITGKTIAEQLADVPSEPSPDQDVIRPWDNPMYKQGHLAILRGNLATEGAVAKITGIKNPQITGPARVFESEEACLEAILAGKIQPNDVIVVRYEGPKGGPGMREMLAPTSAIIGAGLGDSVGLITDGRFSGGTYGMVVGHVAPEAAVGGTIALVQEGDQITIDAHARKLELHVSDQELKERKEKWEQPKPLYNKGVLAKYAKLVSSSSVGAVTDLDLF</sequence>
<keyword id="KW-0001">2Fe-2S</keyword>
<keyword id="KW-0028">Amino-acid biosynthesis</keyword>
<keyword id="KW-0100">Branched-chain amino acid biosynthesis</keyword>
<keyword id="KW-0408">Iron</keyword>
<keyword id="KW-0411">Iron-sulfur</keyword>
<keyword id="KW-0456">Lyase</keyword>
<keyword id="KW-0460">Magnesium</keyword>
<keyword id="KW-0479">Metal-binding</keyword>
<keyword id="KW-1185">Reference proteome</keyword>
<organism>
    <name type="scientific">Acaryochloris marina (strain MBIC 11017)</name>
    <dbReference type="NCBI Taxonomy" id="329726"/>
    <lineage>
        <taxon>Bacteria</taxon>
        <taxon>Bacillati</taxon>
        <taxon>Cyanobacteriota</taxon>
        <taxon>Cyanophyceae</taxon>
        <taxon>Acaryochloridales</taxon>
        <taxon>Acaryochloridaceae</taxon>
        <taxon>Acaryochloris</taxon>
    </lineage>
</organism>
<accession>B0CEN4</accession>
<protein>
    <recommendedName>
        <fullName evidence="1">Dihydroxy-acid dehydratase</fullName>
        <shortName evidence="1">DAD</shortName>
        <ecNumber evidence="1">4.2.1.9</ecNumber>
    </recommendedName>
</protein>